<protein>
    <recommendedName>
        <fullName>Transcriptional regulatory protein TctD</fullName>
    </recommendedName>
</protein>
<feature type="chain" id="PRO_0000081254" description="Transcriptional regulatory protein TctD">
    <location>
        <begin position="1"/>
        <end position="224"/>
    </location>
</feature>
<feature type="domain" description="Response regulatory" evidence="1">
    <location>
        <begin position="2"/>
        <end position="116"/>
    </location>
</feature>
<feature type="DNA-binding region" description="OmpR/PhoB-type" evidence="2">
    <location>
        <begin position="121"/>
        <end position="219"/>
    </location>
</feature>
<feature type="modified residue" description="4-aspartylphosphate" evidence="1">
    <location>
        <position position="51"/>
    </location>
</feature>
<evidence type="ECO:0000255" key="1">
    <source>
        <dbReference type="PROSITE-ProRule" id="PRU00169"/>
    </source>
</evidence>
<evidence type="ECO:0000255" key="2">
    <source>
        <dbReference type="PROSITE-ProRule" id="PRU01091"/>
    </source>
</evidence>
<evidence type="ECO:0000269" key="3">
    <source>
    </source>
</evidence>
<organism>
    <name type="scientific">Salmonella typhimurium (strain LT2 / SGSC1412 / ATCC 700720)</name>
    <dbReference type="NCBI Taxonomy" id="99287"/>
    <lineage>
        <taxon>Bacteria</taxon>
        <taxon>Pseudomonadati</taxon>
        <taxon>Pseudomonadota</taxon>
        <taxon>Gammaproteobacteria</taxon>
        <taxon>Enterobacterales</taxon>
        <taxon>Enterobacteriaceae</taxon>
        <taxon>Salmonella</taxon>
    </lineage>
</organism>
<accession>P0CL17</accession>
<accession>P22104</accession>
<proteinExistence type="evidence at transcript level"/>
<gene>
    <name type="primary">tctD</name>
    <name type="ordered locus">STM2785</name>
</gene>
<comment type="function">
    <text evidence="3">Transcriptional activator of the tctI tricarboxylate transport system operon.</text>
</comment>
<comment type="induction">
    <text evidence="3">TctD expression is regulated by catabolite repression.</text>
</comment>
<dbReference type="EMBL" id="M28368">
    <property type="protein sequence ID" value="AAA27232.1"/>
    <property type="molecule type" value="Genomic_DNA"/>
</dbReference>
<dbReference type="EMBL" id="AE006468">
    <property type="protein sequence ID" value="AAL21670.1"/>
    <property type="molecule type" value="Genomic_DNA"/>
</dbReference>
<dbReference type="PIR" id="A33861">
    <property type="entry name" value="A33861"/>
</dbReference>
<dbReference type="RefSeq" id="NP_461711.1">
    <property type="nucleotide sequence ID" value="NC_003197.2"/>
</dbReference>
<dbReference type="RefSeq" id="WP_001237934.1">
    <property type="nucleotide sequence ID" value="NC_003197.2"/>
</dbReference>
<dbReference type="SMR" id="P0CL17"/>
<dbReference type="STRING" id="99287.STM2785"/>
<dbReference type="PaxDb" id="99287-STM2785"/>
<dbReference type="GeneID" id="1254308"/>
<dbReference type="KEGG" id="stm:STM2785"/>
<dbReference type="PATRIC" id="fig|99287.12.peg.2938"/>
<dbReference type="HOGENOM" id="CLU_000445_30_1_6"/>
<dbReference type="OMA" id="VDCMHDG"/>
<dbReference type="PhylomeDB" id="P0CL17"/>
<dbReference type="BioCyc" id="SENT99287:STM2785-MONOMER"/>
<dbReference type="Proteomes" id="UP000001014">
    <property type="component" value="Chromosome"/>
</dbReference>
<dbReference type="GO" id="GO:0005829">
    <property type="term" value="C:cytosol"/>
    <property type="evidence" value="ECO:0000318"/>
    <property type="project" value="GO_Central"/>
</dbReference>
<dbReference type="GO" id="GO:0032993">
    <property type="term" value="C:protein-DNA complex"/>
    <property type="evidence" value="ECO:0000318"/>
    <property type="project" value="GO_Central"/>
</dbReference>
<dbReference type="GO" id="GO:0000156">
    <property type="term" value="F:phosphorelay response regulator activity"/>
    <property type="evidence" value="ECO:0000318"/>
    <property type="project" value="GO_Central"/>
</dbReference>
<dbReference type="GO" id="GO:0000976">
    <property type="term" value="F:transcription cis-regulatory region binding"/>
    <property type="evidence" value="ECO:0000318"/>
    <property type="project" value="GO_Central"/>
</dbReference>
<dbReference type="GO" id="GO:0006355">
    <property type="term" value="P:regulation of DNA-templated transcription"/>
    <property type="evidence" value="ECO:0000318"/>
    <property type="project" value="GO_Central"/>
</dbReference>
<dbReference type="CDD" id="cd17624">
    <property type="entry name" value="REC_OmpR_PmrA-like"/>
    <property type="match status" value="1"/>
</dbReference>
<dbReference type="CDD" id="cd00383">
    <property type="entry name" value="trans_reg_C"/>
    <property type="match status" value="1"/>
</dbReference>
<dbReference type="FunFam" id="1.10.10.10:FF:000294">
    <property type="entry name" value="DNA-binding response regulator"/>
    <property type="match status" value="1"/>
</dbReference>
<dbReference type="FunFam" id="3.40.50.2300:FF:000002">
    <property type="entry name" value="DNA-binding response regulator PhoP"/>
    <property type="match status" value="1"/>
</dbReference>
<dbReference type="Gene3D" id="3.40.50.2300">
    <property type="match status" value="1"/>
</dbReference>
<dbReference type="Gene3D" id="6.10.250.690">
    <property type="match status" value="1"/>
</dbReference>
<dbReference type="Gene3D" id="1.10.10.10">
    <property type="entry name" value="Winged helix-like DNA-binding domain superfamily/Winged helix DNA-binding domain"/>
    <property type="match status" value="1"/>
</dbReference>
<dbReference type="InterPro" id="IPR011006">
    <property type="entry name" value="CheY-like_superfamily"/>
</dbReference>
<dbReference type="InterPro" id="IPR001867">
    <property type="entry name" value="OmpR/PhoB-type_DNA-bd"/>
</dbReference>
<dbReference type="InterPro" id="IPR016032">
    <property type="entry name" value="Sig_transdc_resp-reg_C-effctor"/>
</dbReference>
<dbReference type="InterPro" id="IPR001789">
    <property type="entry name" value="Sig_transdc_resp-reg_receiver"/>
</dbReference>
<dbReference type="InterPro" id="IPR039420">
    <property type="entry name" value="WalR-like"/>
</dbReference>
<dbReference type="InterPro" id="IPR036388">
    <property type="entry name" value="WH-like_DNA-bd_sf"/>
</dbReference>
<dbReference type="NCBIfam" id="NF012023">
    <property type="entry name" value="PRK15479.1"/>
    <property type="match status" value="1"/>
</dbReference>
<dbReference type="PANTHER" id="PTHR48111">
    <property type="entry name" value="REGULATOR OF RPOS"/>
    <property type="match status" value="1"/>
</dbReference>
<dbReference type="PANTHER" id="PTHR48111:SF67">
    <property type="entry name" value="TRANSCRIPTIONAL REGULATORY PROTEIN TCTD"/>
    <property type="match status" value="1"/>
</dbReference>
<dbReference type="Pfam" id="PF00072">
    <property type="entry name" value="Response_reg"/>
    <property type="match status" value="1"/>
</dbReference>
<dbReference type="Pfam" id="PF00486">
    <property type="entry name" value="Trans_reg_C"/>
    <property type="match status" value="1"/>
</dbReference>
<dbReference type="SMART" id="SM00448">
    <property type="entry name" value="REC"/>
    <property type="match status" value="1"/>
</dbReference>
<dbReference type="SMART" id="SM00862">
    <property type="entry name" value="Trans_reg_C"/>
    <property type="match status" value="1"/>
</dbReference>
<dbReference type="SUPFAM" id="SSF46894">
    <property type="entry name" value="C-terminal effector domain of the bipartite response regulators"/>
    <property type="match status" value="1"/>
</dbReference>
<dbReference type="SUPFAM" id="SSF52172">
    <property type="entry name" value="CheY-like"/>
    <property type="match status" value="1"/>
</dbReference>
<dbReference type="PROSITE" id="PS51755">
    <property type="entry name" value="OMPR_PHOB"/>
    <property type="match status" value="1"/>
</dbReference>
<dbReference type="PROSITE" id="PS50110">
    <property type="entry name" value="RESPONSE_REGULATORY"/>
    <property type="match status" value="1"/>
</dbReference>
<reference key="1">
    <citation type="journal article" date="1989" name="J. Bacteriol.">
        <title>Genetic regulation of the tricarboxylate transport operon (tctI) of Salmonella typhimurium.</title>
        <authorList>
            <person name="Widenhorn K.A."/>
            <person name="Somers J.M."/>
            <person name="Kay W.W."/>
        </authorList>
    </citation>
    <scope>NUCLEOTIDE SEQUENCE [GENOMIC DNA]</scope>
    <scope>FUNCTION</scope>
    <scope>INDUCTION</scope>
</reference>
<reference key="2">
    <citation type="journal article" date="2001" name="Nature">
        <title>Complete genome sequence of Salmonella enterica serovar Typhimurium LT2.</title>
        <authorList>
            <person name="McClelland M."/>
            <person name="Sanderson K.E."/>
            <person name="Spieth J."/>
            <person name="Clifton S.W."/>
            <person name="Latreille P."/>
            <person name="Courtney L."/>
            <person name="Porwollik S."/>
            <person name="Ali J."/>
            <person name="Dante M."/>
            <person name="Du F."/>
            <person name="Hou S."/>
            <person name="Layman D."/>
            <person name="Leonard S."/>
            <person name="Nguyen C."/>
            <person name="Scott K."/>
            <person name="Holmes A."/>
            <person name="Grewal N."/>
            <person name="Mulvaney E."/>
            <person name="Ryan E."/>
            <person name="Sun H."/>
            <person name="Florea L."/>
            <person name="Miller W."/>
            <person name="Stoneking T."/>
            <person name="Nhan M."/>
            <person name="Waterston R."/>
            <person name="Wilson R.K."/>
        </authorList>
    </citation>
    <scope>NUCLEOTIDE SEQUENCE [LARGE SCALE GENOMIC DNA]</scope>
    <source>
        <strain>LT2 / SGSC1412 / ATCC 700720</strain>
    </source>
</reference>
<keyword id="KW-0010">Activator</keyword>
<keyword id="KW-0238">DNA-binding</keyword>
<keyword id="KW-0597">Phosphoprotein</keyword>
<keyword id="KW-1185">Reference proteome</keyword>
<keyword id="KW-0804">Transcription</keyword>
<keyword id="KW-0805">Transcription regulation</keyword>
<keyword id="KW-0902">Two-component regulatory system</keyword>
<sequence>MRLLLAEDNRELAHWLEKALVQNGFAVDCVFDGLAADHLLHSEMYALAVLDINMPGMDGLEVVQRLRKRGQTLPVLLLTARSAVADRVKGLNVGADDYLPKPFELEELDARLRALLRRSAGQVHEVQQLGELIFHDEGYFLLQGQPLALTPREQALLTVLMYRRTRPVSRQQLFEQVFSLNDEVSPESIELYIHRLRKKLQGSDVRITTLRGLGYVLERGDEVG</sequence>
<name>TCTD_SALTY</name>